<reference key="1">
    <citation type="submission" date="1992-01" db="EMBL/GenBank/DDBJ databases">
        <title>Structure and molecular evolution of the gene cluster encoding proteins of the rod substructure of the phycobilisome from the cyanobacterium Mastigocadus laminosus.</title>
        <authorList>
            <person name="Kufer W."/>
            <person name="Hoegner A."/>
            <person name="Eberlein M."/>
            <person name="Mayer K."/>
            <person name="Buchner A."/>
            <person name="Gottschalk L."/>
        </authorList>
    </citation>
    <scope>NUCLEOTIDE SEQUENCE [GENOMIC DNA]</scope>
</reference>
<reference key="2">
    <citation type="journal article" date="1978" name="Hoppe-Seyler's Z. Physiol. Chem.">
        <title>The complete amino acid sequence of both subunits of C-phycocyanin from the cyanobacterium Mastigocladus laminosus.</title>
        <authorList>
            <person name="Frank G."/>
            <person name="Sidler W."/>
            <person name="Widmer H."/>
            <person name="Zuber H."/>
        </authorList>
    </citation>
    <scope>PROTEIN SEQUENCE OF 2-173</scope>
    <scope>SUBUNIT</scope>
    <scope>CHROMOPHORE BINDING</scope>
</reference>
<reference key="3">
    <citation type="journal article" date="1987" name="Biol. Chem. Hoppe-Seyler">
        <title>Isolation and localization of N4-methylasparagine in phycobiliproteins from the cyanobacterium Mastigocladus laminosus.</title>
        <authorList>
            <person name="Ruembeli R."/>
            <person name="Suter F."/>
            <person name="Wirth M."/>
            <person name="Sidler W."/>
            <person name="Zuber H."/>
        </authorList>
    </citation>
    <scope>PROTEIN SEQUENCE OF 38-93</scope>
    <scope>METHYLATION AT ASN-73</scope>
</reference>
<reference key="4">
    <citation type="journal article" date="1987" name="FEBS Lett.">
        <title>Gamma-N-methylasparagine in phycobiliproteins from the cyanobacteria Mastigocladus laminosus and Calothrix.</title>
        <authorList>
            <person name="Ruembeli R."/>
            <person name="Suter F."/>
            <person name="Wirth M."/>
            <person name="Sidler W."/>
            <person name="Zuber H."/>
        </authorList>
    </citation>
    <scope>PROTEIN SEQUENCE OF 56-84</scope>
    <scope>METHYLATION AT ASN-73</scope>
</reference>
<reference key="5">
    <citation type="journal article" date="1988" name="FEBS Lett.">
        <title>The structure of gamma-N-methylasparagine in C-phycocyanin from Mastigocladus laminosus and Agmenellum quadruplicatum.</title>
        <authorList>
            <person name="Duerring M."/>
            <person name="Huber R."/>
            <person name="Bode W."/>
        </authorList>
    </citation>
    <scope>3D-STRUCTURE AROUND METHYLATED SITE</scope>
</reference>
<name>PHCB_MASLA</name>
<evidence type="ECO:0000250" key="1">
    <source>
        <dbReference type="UniProtKB" id="P06539"/>
    </source>
</evidence>
<evidence type="ECO:0000269" key="2">
    <source>
    </source>
</evidence>
<evidence type="ECO:0000269" key="3">
    <source>
    </source>
</evidence>
<evidence type="ECO:0000269" key="4">
    <source ref="4"/>
</evidence>
<evidence type="ECO:0000269" key="5">
    <source ref="5"/>
</evidence>
<evidence type="ECO:0000305" key="6"/>
<dbReference type="EMBL" id="M75599">
    <property type="protein sequence ID" value="AAC64649.1"/>
    <property type="molecule type" value="Genomic_DNA"/>
</dbReference>
<dbReference type="SMR" id="P00310"/>
<dbReference type="iPTMnet" id="P00310"/>
<dbReference type="GO" id="GO:0030089">
    <property type="term" value="C:phycobilisome"/>
    <property type="evidence" value="ECO:0007669"/>
    <property type="project" value="UniProtKB-KW"/>
</dbReference>
<dbReference type="GO" id="GO:0031676">
    <property type="term" value="C:plasma membrane-derived thylakoid membrane"/>
    <property type="evidence" value="ECO:0007669"/>
    <property type="project" value="UniProtKB-SubCell"/>
</dbReference>
<dbReference type="GO" id="GO:0015979">
    <property type="term" value="P:photosynthesis"/>
    <property type="evidence" value="ECO:0007669"/>
    <property type="project" value="UniProtKB-KW"/>
</dbReference>
<dbReference type="CDD" id="cd14768">
    <property type="entry name" value="PC_PEC_beta"/>
    <property type="match status" value="1"/>
</dbReference>
<dbReference type="Gene3D" id="1.10.490.20">
    <property type="entry name" value="Phycocyanins"/>
    <property type="match status" value="1"/>
</dbReference>
<dbReference type="InterPro" id="IPR009050">
    <property type="entry name" value="Globin-like_sf"/>
</dbReference>
<dbReference type="InterPro" id="IPR012128">
    <property type="entry name" value="Phycobilisome_asu/bsu"/>
</dbReference>
<dbReference type="InterPro" id="IPR038719">
    <property type="entry name" value="Phycobilisome_asu/bsu_sf"/>
</dbReference>
<dbReference type="InterPro" id="IPR006247">
    <property type="entry name" value="Phycocyanin_b"/>
</dbReference>
<dbReference type="NCBIfam" id="TIGR01339">
    <property type="entry name" value="phycocy_beta"/>
    <property type="match status" value="1"/>
</dbReference>
<dbReference type="PANTHER" id="PTHR34011:SF7">
    <property type="entry name" value="C-PHYCOCYANIN BETA SUBUNIT"/>
    <property type="match status" value="1"/>
</dbReference>
<dbReference type="PANTHER" id="PTHR34011">
    <property type="entry name" value="PHYCOBILISOME 32.1 KDA LINKER POLYPEPTIDE, PHYCOCYANIN-ASSOCIATED, ROD 2-RELATED"/>
    <property type="match status" value="1"/>
</dbReference>
<dbReference type="Pfam" id="PF00502">
    <property type="entry name" value="Phycobilisome"/>
    <property type="match status" value="1"/>
</dbReference>
<dbReference type="PIRSF" id="PIRSF000081">
    <property type="entry name" value="Phycocyanin"/>
    <property type="match status" value="1"/>
</dbReference>
<dbReference type="SUPFAM" id="SSF46458">
    <property type="entry name" value="Globin-like"/>
    <property type="match status" value="1"/>
</dbReference>
<comment type="function">
    <text>Light-harvesting photosynthetic bile pigment-protein from the phycobiliprotein complex (phycobilisome, PBS). Phycocyanin is the major phycobiliprotein in the PBS rod.</text>
</comment>
<comment type="subunit">
    <text evidence="1 2">Heterodimer of an alpha and a beta subunit (PubMed:103794). Heterodimers further assemble into trimers and the trimers into hexamers (By similarity).</text>
</comment>
<comment type="subcellular location">
    <subcellularLocation>
        <location>Cellular thylakoid membrane</location>
        <topology>Peripheral membrane protein</topology>
        <orientation>Cytoplasmic side</orientation>
    </subcellularLocation>
    <text>Part of the phycobilisome rod.</text>
</comment>
<comment type="PTM">
    <text evidence="2">Contains two covalently linked bilin chromophores.</text>
</comment>
<comment type="similarity">
    <text evidence="6">Belongs to the phycobiliprotein family.</text>
</comment>
<organism>
    <name type="scientific">Mastigocladus laminosus</name>
    <name type="common">Fischerella sp.</name>
    <dbReference type="NCBI Taxonomy" id="83541"/>
    <lineage>
        <taxon>Bacteria</taxon>
        <taxon>Bacillati</taxon>
        <taxon>Cyanobacteriota</taxon>
        <taxon>Cyanophyceae</taxon>
        <taxon>Nostocales</taxon>
        <taxon>Hapalosiphonaceae</taxon>
        <taxon>Mastigocladus</taxon>
    </lineage>
</organism>
<sequence>MAYDVFTKVVSQADSRGEFLSNEQLDALANVVKEGNKRLDVVNRITSNASTIVTNAARALFEEQPQLIAPGGNAYTNRRMAACLRDMEIILRYITYAILAGDASILDDRCLNGLRETYQALGTPGSSVAVGIQKMKEAAINIANDPNGITKGDCSALISEVASYFDRAAAAVA</sequence>
<gene>
    <name type="primary">cpcB</name>
</gene>
<proteinExistence type="evidence at protein level"/>
<accession>P00310</accession>
<protein>
    <recommendedName>
        <fullName>C-phycocyanin beta subunit</fullName>
    </recommendedName>
</protein>
<feature type="initiator methionine" description="Removed" evidence="2">
    <location>
        <position position="1"/>
    </location>
</feature>
<feature type="chain" id="PRO_0000199150" description="C-phycocyanin beta subunit">
    <location>
        <begin position="2"/>
        <end position="173"/>
    </location>
</feature>
<feature type="binding site" description="covalent" evidence="2">
    <location>
        <position position="83"/>
    </location>
    <ligand>
        <name>(2R,3E)-phycocyanobilin</name>
        <dbReference type="ChEBI" id="CHEBI:85275"/>
        <label>1</label>
    </ligand>
</feature>
<feature type="binding site" description="covalent" evidence="2">
    <location>
        <position position="154"/>
    </location>
    <ligand>
        <name>(2R,3E)-phycocyanobilin</name>
        <dbReference type="ChEBI" id="CHEBI:85275"/>
        <label>2</label>
    </ligand>
</feature>
<feature type="modified residue" description="N4-methylasparagine" evidence="3 4 5">
    <location>
        <position position="73"/>
    </location>
</feature>
<feature type="sequence conflict" description="In Ref. 2; AA sequence." evidence="6" ref="2">
    <original>YTNRR</original>
    <variation>TRNGT</variation>
    <location>
        <begin position="75"/>
        <end position="79"/>
    </location>
</feature>
<keyword id="KW-0042">Antenna complex</keyword>
<keyword id="KW-0089">Bile pigment</keyword>
<keyword id="KW-0157">Chromophore</keyword>
<keyword id="KW-0903">Direct protein sequencing</keyword>
<keyword id="KW-0249">Electron transport</keyword>
<keyword id="KW-0472">Membrane</keyword>
<keyword id="KW-0488">Methylation</keyword>
<keyword id="KW-0602">Photosynthesis</keyword>
<keyword id="KW-0605">Phycobilisome</keyword>
<keyword id="KW-0793">Thylakoid</keyword>
<keyword id="KW-0813">Transport</keyword>